<sequence>MHNQAPIQRRKSTRIYVGNVPIGDGAPIAVQSMTNTRTTDVEATVNQIKALERVGADIVRVSVPTMDAAEAFKLIKQRVNVPLVADIHFDYRIALKVAEYGVDCLRINPGNIGNEERIRMVVDCARDKNIPIRIGVNAGSLEKDLQEKYGEPTPQALLESAMRHVDHLDRLNFDQFKVSVKASDVFLAVESYRLLAKQIDQPLHLGITEAGGARSGAVKSAIGLGLLLSEGIGDTLRVSLAADPVEEIKVGFDILKSLRIRSRGINFIACPTCSRQEFDVIGTVNALEQRLEDIITPMDVSIIGCVVNGPGEALVSTLGVTGGNKKSGLYEDGVRKDRLDNNDMIDQLEARIRAKASQLDEARRIDVQQVGKIIT</sequence>
<organism>
    <name type="scientific">Shigella flexneri serotype 5b (strain 8401)</name>
    <dbReference type="NCBI Taxonomy" id="373384"/>
    <lineage>
        <taxon>Bacteria</taxon>
        <taxon>Pseudomonadati</taxon>
        <taxon>Pseudomonadota</taxon>
        <taxon>Gammaproteobacteria</taxon>
        <taxon>Enterobacterales</taxon>
        <taxon>Enterobacteriaceae</taxon>
        <taxon>Shigella</taxon>
    </lineage>
</organism>
<accession>Q0T204</accession>
<name>ISPG_SHIF8</name>
<proteinExistence type="inferred from homology"/>
<comment type="function">
    <text evidence="1">Converts 2C-methyl-D-erythritol 2,4-cyclodiphosphate (ME-2,4cPP) into 1-hydroxy-2-methyl-2-(E)-butenyl 4-diphosphate.</text>
</comment>
<comment type="catalytic activity">
    <reaction evidence="1">
        <text>(2E)-4-hydroxy-3-methylbut-2-enyl diphosphate + oxidized [flavodoxin] + H2O + 2 H(+) = 2-C-methyl-D-erythritol 2,4-cyclic diphosphate + reduced [flavodoxin]</text>
        <dbReference type="Rhea" id="RHEA:43604"/>
        <dbReference type="Rhea" id="RHEA-COMP:10622"/>
        <dbReference type="Rhea" id="RHEA-COMP:10623"/>
        <dbReference type="ChEBI" id="CHEBI:15377"/>
        <dbReference type="ChEBI" id="CHEBI:15378"/>
        <dbReference type="ChEBI" id="CHEBI:57618"/>
        <dbReference type="ChEBI" id="CHEBI:58210"/>
        <dbReference type="ChEBI" id="CHEBI:58483"/>
        <dbReference type="ChEBI" id="CHEBI:128753"/>
        <dbReference type="EC" id="1.17.7.3"/>
    </reaction>
</comment>
<comment type="cofactor">
    <cofactor evidence="1">
        <name>[4Fe-4S] cluster</name>
        <dbReference type="ChEBI" id="CHEBI:49883"/>
    </cofactor>
    <text evidence="1">Binds 1 [4Fe-4S] cluster.</text>
</comment>
<comment type="pathway">
    <text evidence="1">Isoprenoid biosynthesis; isopentenyl diphosphate biosynthesis via DXP pathway; isopentenyl diphosphate from 1-deoxy-D-xylulose 5-phosphate: step 5/6.</text>
</comment>
<comment type="similarity">
    <text evidence="1">Belongs to the IspG family.</text>
</comment>
<reference key="1">
    <citation type="journal article" date="2006" name="BMC Genomics">
        <title>Complete genome sequence of Shigella flexneri 5b and comparison with Shigella flexneri 2a.</title>
        <authorList>
            <person name="Nie H."/>
            <person name="Yang F."/>
            <person name="Zhang X."/>
            <person name="Yang J."/>
            <person name="Chen L."/>
            <person name="Wang J."/>
            <person name="Xiong Z."/>
            <person name="Peng J."/>
            <person name="Sun L."/>
            <person name="Dong J."/>
            <person name="Xue Y."/>
            <person name="Xu X."/>
            <person name="Chen S."/>
            <person name="Yao Z."/>
            <person name="Shen Y."/>
            <person name="Jin Q."/>
        </authorList>
    </citation>
    <scope>NUCLEOTIDE SEQUENCE [LARGE SCALE GENOMIC DNA]</scope>
    <source>
        <strain>8401</strain>
    </source>
</reference>
<dbReference type="EC" id="1.17.7.3" evidence="1"/>
<dbReference type="EMBL" id="CP000266">
    <property type="protein sequence ID" value="ABF04661.1"/>
    <property type="molecule type" value="Genomic_DNA"/>
</dbReference>
<dbReference type="RefSeq" id="WP_000551819.1">
    <property type="nucleotide sequence ID" value="NC_008258.1"/>
</dbReference>
<dbReference type="SMR" id="Q0T204"/>
<dbReference type="KEGG" id="sfv:SFV_2562"/>
<dbReference type="HOGENOM" id="CLU_042258_0_0_6"/>
<dbReference type="UniPathway" id="UPA00056">
    <property type="reaction ID" value="UER00096"/>
</dbReference>
<dbReference type="Proteomes" id="UP000000659">
    <property type="component" value="Chromosome"/>
</dbReference>
<dbReference type="GO" id="GO:0051539">
    <property type="term" value="F:4 iron, 4 sulfur cluster binding"/>
    <property type="evidence" value="ECO:0007669"/>
    <property type="project" value="UniProtKB-UniRule"/>
</dbReference>
<dbReference type="GO" id="GO:0046429">
    <property type="term" value="F:4-hydroxy-3-methylbut-2-en-1-yl diphosphate synthase activity (ferredoxin)"/>
    <property type="evidence" value="ECO:0007669"/>
    <property type="project" value="UniProtKB-UniRule"/>
</dbReference>
<dbReference type="GO" id="GO:0141197">
    <property type="term" value="F:4-hydroxy-3-methylbut-2-enyl-diphosphate synthase activity (flavodoxin)"/>
    <property type="evidence" value="ECO:0007669"/>
    <property type="project" value="UniProtKB-EC"/>
</dbReference>
<dbReference type="GO" id="GO:0005506">
    <property type="term" value="F:iron ion binding"/>
    <property type="evidence" value="ECO:0007669"/>
    <property type="project" value="InterPro"/>
</dbReference>
<dbReference type="GO" id="GO:0019288">
    <property type="term" value="P:isopentenyl diphosphate biosynthetic process, methylerythritol 4-phosphate pathway"/>
    <property type="evidence" value="ECO:0007669"/>
    <property type="project" value="UniProtKB-UniRule"/>
</dbReference>
<dbReference type="GO" id="GO:0016114">
    <property type="term" value="P:terpenoid biosynthetic process"/>
    <property type="evidence" value="ECO:0007669"/>
    <property type="project" value="InterPro"/>
</dbReference>
<dbReference type="FunFam" id="3.20.20.20:FF:000001">
    <property type="entry name" value="4-hydroxy-3-methylbut-2-en-1-yl diphosphate synthase (flavodoxin)"/>
    <property type="match status" value="1"/>
</dbReference>
<dbReference type="FunFam" id="3.30.413.10:FF:000002">
    <property type="entry name" value="4-hydroxy-3-methylbut-2-en-1-yl diphosphate synthase (flavodoxin)"/>
    <property type="match status" value="1"/>
</dbReference>
<dbReference type="Gene3D" id="3.20.20.20">
    <property type="entry name" value="Dihydropteroate synthase-like"/>
    <property type="match status" value="1"/>
</dbReference>
<dbReference type="Gene3D" id="3.30.413.10">
    <property type="entry name" value="Sulfite Reductase Hemoprotein, domain 1"/>
    <property type="match status" value="1"/>
</dbReference>
<dbReference type="HAMAP" id="MF_00159">
    <property type="entry name" value="IspG"/>
    <property type="match status" value="1"/>
</dbReference>
<dbReference type="InterPro" id="IPR011005">
    <property type="entry name" value="Dihydropteroate_synth-like_sf"/>
</dbReference>
<dbReference type="InterPro" id="IPR016425">
    <property type="entry name" value="IspG_bac"/>
</dbReference>
<dbReference type="InterPro" id="IPR004588">
    <property type="entry name" value="IspG_bac-typ"/>
</dbReference>
<dbReference type="InterPro" id="IPR045854">
    <property type="entry name" value="NO2/SO3_Rdtase_4Fe4S_sf"/>
</dbReference>
<dbReference type="NCBIfam" id="TIGR00612">
    <property type="entry name" value="ispG_gcpE"/>
    <property type="match status" value="1"/>
</dbReference>
<dbReference type="NCBIfam" id="NF001540">
    <property type="entry name" value="PRK00366.1"/>
    <property type="match status" value="1"/>
</dbReference>
<dbReference type="PANTHER" id="PTHR30454">
    <property type="entry name" value="4-HYDROXY-3-METHYLBUT-2-EN-1-YL DIPHOSPHATE SYNTHASE"/>
    <property type="match status" value="1"/>
</dbReference>
<dbReference type="PANTHER" id="PTHR30454:SF0">
    <property type="entry name" value="4-HYDROXY-3-METHYLBUT-2-EN-1-YL DIPHOSPHATE SYNTHASE (FERREDOXIN), CHLOROPLASTIC"/>
    <property type="match status" value="1"/>
</dbReference>
<dbReference type="Pfam" id="PF04551">
    <property type="entry name" value="GcpE"/>
    <property type="match status" value="1"/>
</dbReference>
<dbReference type="PIRSF" id="PIRSF004640">
    <property type="entry name" value="IspG"/>
    <property type="match status" value="1"/>
</dbReference>
<dbReference type="SUPFAM" id="SSF51717">
    <property type="entry name" value="Dihydropteroate synthetase-like"/>
    <property type="match status" value="1"/>
</dbReference>
<dbReference type="SUPFAM" id="SSF56014">
    <property type="entry name" value="Nitrite and sulphite reductase 4Fe-4S domain-like"/>
    <property type="match status" value="1"/>
</dbReference>
<keyword id="KW-0004">4Fe-4S</keyword>
<keyword id="KW-0408">Iron</keyword>
<keyword id="KW-0411">Iron-sulfur</keyword>
<keyword id="KW-0414">Isoprene biosynthesis</keyword>
<keyword id="KW-0479">Metal-binding</keyword>
<keyword id="KW-0560">Oxidoreductase</keyword>
<protein>
    <recommendedName>
        <fullName evidence="1">4-hydroxy-3-methylbut-2-en-1-yl diphosphate synthase (flavodoxin)</fullName>
        <ecNumber evidence="1">1.17.7.3</ecNumber>
    </recommendedName>
    <alternativeName>
        <fullName evidence="1">1-hydroxy-2-methyl-2-(E)-butenyl 4-diphosphate synthase</fullName>
    </alternativeName>
</protein>
<evidence type="ECO:0000255" key="1">
    <source>
        <dbReference type="HAMAP-Rule" id="MF_00159"/>
    </source>
</evidence>
<feature type="chain" id="PRO_1000011527" description="4-hydroxy-3-methylbut-2-en-1-yl diphosphate synthase (flavodoxin)">
    <location>
        <begin position="1"/>
        <end position="375"/>
    </location>
</feature>
<feature type="binding site" evidence="1">
    <location>
        <position position="270"/>
    </location>
    <ligand>
        <name>[4Fe-4S] cluster</name>
        <dbReference type="ChEBI" id="CHEBI:49883"/>
    </ligand>
</feature>
<feature type="binding site" evidence="1">
    <location>
        <position position="273"/>
    </location>
    <ligand>
        <name>[4Fe-4S] cluster</name>
        <dbReference type="ChEBI" id="CHEBI:49883"/>
    </ligand>
</feature>
<feature type="binding site" evidence="1">
    <location>
        <position position="305"/>
    </location>
    <ligand>
        <name>[4Fe-4S] cluster</name>
        <dbReference type="ChEBI" id="CHEBI:49883"/>
    </ligand>
</feature>
<feature type="binding site" evidence="1">
    <location>
        <position position="312"/>
    </location>
    <ligand>
        <name>[4Fe-4S] cluster</name>
        <dbReference type="ChEBI" id="CHEBI:49883"/>
    </ligand>
</feature>
<gene>
    <name evidence="1" type="primary">ispG</name>
    <name type="ordered locus">SFV_2562</name>
</gene>